<feature type="chain" id="PRO_0000195677" description="Adenylate cyclase">
    <location>
        <begin position="1"/>
        <end position="838"/>
    </location>
</feature>
<feature type="region of interest" description="Catalytic" evidence="1">
    <location>
        <begin position="1"/>
        <end position="541"/>
    </location>
</feature>
<feature type="region of interest" description="Regulatory" evidence="1">
    <location>
        <begin position="547"/>
        <end position="838"/>
    </location>
</feature>
<feature type="sequence conflict" description="In Ref. 1; AAA25532." evidence="2" ref="1">
    <original>D</original>
    <variation>A</variation>
    <location>
        <position position="469"/>
    </location>
</feature>
<feature type="sequence conflict" description="In Ref. 1; AAA25532." evidence="2" ref="1">
    <original>TA</original>
    <variation>PH</variation>
    <location>
        <begin position="659"/>
        <end position="660"/>
    </location>
</feature>
<accession>Q05766</accession>
<keyword id="KW-0067">ATP-binding</keyword>
<keyword id="KW-0115">cAMP biosynthesis</keyword>
<keyword id="KW-0963">Cytoplasm</keyword>
<keyword id="KW-0456">Lyase</keyword>
<keyword id="KW-0547">Nucleotide-binding</keyword>
<keyword id="KW-1185">Reference proteome</keyword>
<comment type="catalytic activity">
    <reaction>
        <text>ATP = 3',5'-cyclic AMP + diphosphate</text>
        <dbReference type="Rhea" id="RHEA:15389"/>
        <dbReference type="ChEBI" id="CHEBI:30616"/>
        <dbReference type="ChEBI" id="CHEBI:33019"/>
        <dbReference type="ChEBI" id="CHEBI:58165"/>
        <dbReference type="EC" id="4.6.1.1"/>
    </reaction>
</comment>
<comment type="subcellular location">
    <subcellularLocation>
        <location>Cytoplasm</location>
    </subcellularLocation>
</comment>
<comment type="similarity">
    <text evidence="2">Belongs to the adenylyl cyclase class-1 family.</text>
</comment>
<proteinExistence type="inferred from homology"/>
<evidence type="ECO:0000255" key="1"/>
<evidence type="ECO:0000305" key="2"/>
<protein>
    <recommendedName>
        <fullName>Adenylate cyclase</fullName>
        <ecNumber>4.6.1.1</ecNumber>
    </recommendedName>
    <alternativeName>
        <fullName>ATP pyrophosphate-lyase</fullName>
    </alternativeName>
    <alternativeName>
        <fullName>Adenylyl cyclase</fullName>
    </alternativeName>
</protein>
<organism>
    <name type="scientific">Pasteurella multocida (strain Pm70)</name>
    <dbReference type="NCBI Taxonomy" id="272843"/>
    <lineage>
        <taxon>Bacteria</taxon>
        <taxon>Pseudomonadati</taxon>
        <taxon>Pseudomonadota</taxon>
        <taxon>Gammaproteobacteria</taxon>
        <taxon>Pasteurellales</taxon>
        <taxon>Pasteurellaceae</taxon>
        <taxon>Pasteurella</taxon>
    </lineage>
</organism>
<name>CYAA_PASMU</name>
<gene>
    <name type="primary">cya</name>
    <name type="ordered locus">PM1811</name>
</gene>
<reference key="1">
    <citation type="journal article" date="1991" name="J. Bacteriol.">
        <title>Structural and functional relationships between Pasteurella multocida and enterobacterial adenylate cyclases.</title>
        <authorList>
            <person name="Mock M."/>
            <person name="Crasnier M."/>
            <person name="Duflot E."/>
            <person name="Dumay V."/>
            <person name="Danchin A."/>
        </authorList>
    </citation>
    <scope>NUCLEOTIDE SEQUENCE [GENOMIC DNA]</scope>
    <source>
        <strain>ATCC 43137 / LMG 2851 / NCTC 10322 / W-9217</strain>
    </source>
</reference>
<reference key="2">
    <citation type="journal article" date="2001" name="Proc. Natl. Acad. Sci. U.S.A.">
        <title>Complete genomic sequence of Pasteurella multocida Pm70.</title>
        <authorList>
            <person name="May B.J."/>
            <person name="Zhang Q."/>
            <person name="Li L.L."/>
            <person name="Paustian M.L."/>
            <person name="Whittam T.S."/>
            <person name="Kapur V."/>
        </authorList>
    </citation>
    <scope>NUCLEOTIDE SEQUENCE [LARGE SCALE GENOMIC DNA]</scope>
    <source>
        <strain>Pm70</strain>
    </source>
</reference>
<reference key="3">
    <citation type="journal article" date="1993" name="Adv. Second Messenger Phosphoprotein Res.">
        <title>Phylogeny of adenylyl cyclases.</title>
        <authorList>
            <person name="Danchin A."/>
        </authorList>
    </citation>
    <scope>REVIEW</scope>
</reference>
<dbReference type="EC" id="4.6.1.1"/>
<dbReference type="EMBL" id="M68901">
    <property type="protein sequence ID" value="AAA25532.1"/>
    <property type="molecule type" value="Genomic_DNA"/>
</dbReference>
<dbReference type="EMBL" id="AE004439">
    <property type="protein sequence ID" value="AAK03895.1"/>
    <property type="molecule type" value="Genomic_DNA"/>
</dbReference>
<dbReference type="PIR" id="A38172">
    <property type="entry name" value="A38172"/>
</dbReference>
<dbReference type="RefSeq" id="WP_005724808.1">
    <property type="nucleotide sequence ID" value="NC_002663.1"/>
</dbReference>
<dbReference type="STRING" id="272843.PM1811"/>
<dbReference type="EnsemblBacteria" id="AAK03895">
    <property type="protein sequence ID" value="AAK03895"/>
    <property type="gene ID" value="PM1811"/>
</dbReference>
<dbReference type="KEGG" id="pmu:PM1811"/>
<dbReference type="HOGENOM" id="CLU_013280_0_0_6"/>
<dbReference type="OrthoDB" id="5571448at2"/>
<dbReference type="Proteomes" id="UP000000809">
    <property type="component" value="Chromosome"/>
</dbReference>
<dbReference type="GO" id="GO:0005737">
    <property type="term" value="C:cytoplasm"/>
    <property type="evidence" value="ECO:0007669"/>
    <property type="project" value="UniProtKB-SubCell"/>
</dbReference>
<dbReference type="GO" id="GO:0004016">
    <property type="term" value="F:adenylate cyclase activity"/>
    <property type="evidence" value="ECO:0007669"/>
    <property type="project" value="UniProtKB-EC"/>
</dbReference>
<dbReference type="GO" id="GO:0005524">
    <property type="term" value="F:ATP binding"/>
    <property type="evidence" value="ECO:0007669"/>
    <property type="project" value="UniProtKB-KW"/>
</dbReference>
<dbReference type="GO" id="GO:0006171">
    <property type="term" value="P:cAMP biosynthetic process"/>
    <property type="evidence" value="ECO:0007669"/>
    <property type="project" value="UniProtKB-KW"/>
</dbReference>
<dbReference type="InterPro" id="IPR000274">
    <property type="entry name" value="Adenylate_cyclase_1"/>
</dbReference>
<dbReference type="InterPro" id="IPR024686">
    <property type="entry name" value="Adenylate_cyclase_1_CS"/>
</dbReference>
<dbReference type="InterPro" id="IPR024685">
    <property type="entry name" value="Adenylate_cyclase_1_N"/>
</dbReference>
<dbReference type="NCBIfam" id="NF006978">
    <property type="entry name" value="PRK09450.1-2"/>
    <property type="match status" value="1"/>
</dbReference>
<dbReference type="PANTHER" id="PTHR38760">
    <property type="entry name" value="ADENYLATE CYCLASE"/>
    <property type="match status" value="1"/>
</dbReference>
<dbReference type="PANTHER" id="PTHR38760:SF1">
    <property type="entry name" value="ADENYLATE CYCLASE"/>
    <property type="match status" value="1"/>
</dbReference>
<dbReference type="Pfam" id="PF12633">
    <property type="entry name" value="Adenyl_cycl_N"/>
    <property type="match status" value="1"/>
</dbReference>
<dbReference type="Pfam" id="PF01295">
    <property type="entry name" value="Adenylate_cycl"/>
    <property type="match status" value="1"/>
</dbReference>
<dbReference type="PIRSF" id="PIRSF001444">
    <property type="entry name" value="Adenylate_cycl"/>
    <property type="match status" value="1"/>
</dbReference>
<dbReference type="PROSITE" id="PS01092">
    <property type="entry name" value="ADENYLATE_CYCLASE_1_1"/>
    <property type="match status" value="1"/>
</dbReference>
<dbReference type="PROSITE" id="PS01093">
    <property type="entry name" value="ADENYLATE_CYCLASE_1_2"/>
    <property type="match status" value="1"/>
</dbReference>
<sequence>MNYDLFSAQKKVEYLDKLRIERALSGSSGEFQHVFQLLTLLLHINHPNLPGYVADAPVGIADFVISPYQKQYLLTTVPSLEANQSLLPSFSYRSTNAILGVYVMGSIASISQTPKSDLDTWVCHRDDLSTKEKEALQRKTHLLKNWAKQFNIEINFYLMDQKRFRCFRYAEPLTAENCGSAQYMLLLDEFYRSAIRLAGKPLLWLHLLIEQEENYESEVERLVRTQQICLDDWVDFGGLGQLSANEYFGASLWQLYKGIDAPYKSVIKILLLETYSSEYPNTYLIARQFKEELLTGKLNPSHHFDPYLAMLQRATRYLTKHNELKRLGFVRRSVYLKATEGMCWQDPNATNNWRLQHLQKLIQEWDWSDALIEELNQRANWKIKQVKKAHNSLIKFLMLSYRNLVAFARKHKVNSSIMPQDISVLTRKLYTAFEELPGKITLLNPQISLNLSEKNLLFFEVKGSKTFKDGWYVVNQTPSVAGFVQKRYTEYSESLNKLVAWAYFNRILTANTDLHIISPNVSLTTLRHFVTDLRLSFPVTVSSVTNEDLTHACEIRSLIVAVNLTVDPTKKITQVKSRIQASDLFSFGPKEESLVGSIDITYRNLWNEIRTLHFEGPNAILLALKVLSNKIHRGAPSPKLIQVFSYSHRYRRTLSNIVTALINRCISIQIGDALPPQNNLLRVAGKNWQFFFEERGISLQEIHSNEELEATGFDTALQTEVEEKESALPDTSRTYPPEIDHFASEGFLQFFFEDNSDGSFNVYILDEANRIEIYRNCDGQKEKKILEINHIYQSSGLDENNNPYKIVQRDFNYPQFYQLLLQENGVKIVPFHSRLAMS</sequence>